<accession>A6UQ52</accession>
<name>RNP1_METVS</name>
<dbReference type="EC" id="3.1.26.5" evidence="1"/>
<dbReference type="EMBL" id="CP000742">
    <property type="protein sequence ID" value="ABR54624.1"/>
    <property type="molecule type" value="Genomic_DNA"/>
</dbReference>
<dbReference type="RefSeq" id="WP_011972526.1">
    <property type="nucleotide sequence ID" value="NC_009634.1"/>
</dbReference>
<dbReference type="SMR" id="A6UQ52"/>
<dbReference type="STRING" id="406327.Mevan_0718"/>
<dbReference type="GeneID" id="5326119"/>
<dbReference type="KEGG" id="mvn:Mevan_0718"/>
<dbReference type="eggNOG" id="arCOG00784">
    <property type="taxonomic scope" value="Archaea"/>
</dbReference>
<dbReference type="HOGENOM" id="CLU_107020_2_1_2"/>
<dbReference type="OrthoDB" id="39019at2157"/>
<dbReference type="Proteomes" id="UP000001107">
    <property type="component" value="Chromosome"/>
</dbReference>
<dbReference type="GO" id="GO:0005737">
    <property type="term" value="C:cytoplasm"/>
    <property type="evidence" value="ECO:0007669"/>
    <property type="project" value="UniProtKB-SubCell"/>
</dbReference>
<dbReference type="GO" id="GO:0030677">
    <property type="term" value="C:ribonuclease P complex"/>
    <property type="evidence" value="ECO:0007669"/>
    <property type="project" value="UniProtKB-UniRule"/>
</dbReference>
<dbReference type="GO" id="GO:0004526">
    <property type="term" value="F:ribonuclease P activity"/>
    <property type="evidence" value="ECO:0007669"/>
    <property type="project" value="UniProtKB-UniRule"/>
</dbReference>
<dbReference type="GO" id="GO:0003723">
    <property type="term" value="F:RNA binding"/>
    <property type="evidence" value="ECO:0007669"/>
    <property type="project" value="InterPro"/>
</dbReference>
<dbReference type="GO" id="GO:0001682">
    <property type="term" value="P:tRNA 5'-leader removal"/>
    <property type="evidence" value="ECO:0007669"/>
    <property type="project" value="UniProtKB-UniRule"/>
</dbReference>
<dbReference type="Gene3D" id="2.30.30.210">
    <property type="entry name" value="Ribonuclease P/MRP, subunit p29"/>
    <property type="match status" value="1"/>
</dbReference>
<dbReference type="HAMAP" id="MF_00754">
    <property type="entry name" value="RNase_P_1"/>
    <property type="match status" value="1"/>
</dbReference>
<dbReference type="InterPro" id="IPR036980">
    <property type="entry name" value="RNase_P/MRP_Rpp29_sf"/>
</dbReference>
<dbReference type="InterPro" id="IPR023538">
    <property type="entry name" value="RNP1"/>
</dbReference>
<dbReference type="InterPro" id="IPR023534">
    <property type="entry name" value="Rof/RNase_P-like"/>
</dbReference>
<dbReference type="InterPro" id="IPR002730">
    <property type="entry name" value="Rpp29/RNP1"/>
</dbReference>
<dbReference type="NCBIfam" id="NF046110">
    <property type="entry name" value="RNaseP1Mthb"/>
    <property type="match status" value="1"/>
</dbReference>
<dbReference type="Pfam" id="PF01868">
    <property type="entry name" value="RNase_P-MRP_p29"/>
    <property type="match status" value="1"/>
</dbReference>
<dbReference type="SMART" id="SM00538">
    <property type="entry name" value="POP4"/>
    <property type="match status" value="1"/>
</dbReference>
<dbReference type="SUPFAM" id="SSF101744">
    <property type="entry name" value="Rof/RNase P subunit-like"/>
    <property type="match status" value="1"/>
</dbReference>
<feature type="chain" id="PRO_1000046617" description="Ribonuclease P protein component 1">
    <location>
        <begin position="1"/>
        <end position="99"/>
    </location>
</feature>
<gene>
    <name evidence="1" type="primary">rnp1</name>
    <name type="ordered locus">Mevan_0718</name>
</gene>
<comment type="function">
    <text evidence="1">Part of ribonuclease P, a protein complex that generates mature tRNA molecules by cleaving their 5'-ends.</text>
</comment>
<comment type="catalytic activity">
    <reaction evidence="1">
        <text>Endonucleolytic cleavage of RNA, removing 5'-extranucleotides from tRNA precursor.</text>
        <dbReference type="EC" id="3.1.26.5"/>
    </reaction>
</comment>
<comment type="subunit">
    <text evidence="1">Consists of a catalytic RNA component and at least 4-5 protein subunits.</text>
</comment>
<comment type="subcellular location">
    <subcellularLocation>
        <location evidence="1">Cytoplasm</location>
    </subcellularLocation>
</comment>
<comment type="similarity">
    <text evidence="1">Belongs to the eukaryotic/archaeal RNase P protein component 1 family.</text>
</comment>
<keyword id="KW-0963">Cytoplasm</keyword>
<keyword id="KW-0255">Endonuclease</keyword>
<keyword id="KW-0378">Hydrolase</keyword>
<keyword id="KW-0540">Nuclease</keyword>
<keyword id="KW-0819">tRNA processing</keyword>
<proteinExistence type="inferred from homology"/>
<reference key="1">
    <citation type="submission" date="2007-06" db="EMBL/GenBank/DDBJ databases">
        <title>Complete sequence of Methanococcus vannielii SB.</title>
        <authorList>
            <consortium name="US DOE Joint Genome Institute"/>
            <person name="Copeland A."/>
            <person name="Lucas S."/>
            <person name="Lapidus A."/>
            <person name="Barry K."/>
            <person name="Glavina del Rio T."/>
            <person name="Dalin E."/>
            <person name="Tice H."/>
            <person name="Pitluck S."/>
            <person name="Chain P."/>
            <person name="Malfatti S."/>
            <person name="Shin M."/>
            <person name="Vergez L."/>
            <person name="Schmutz J."/>
            <person name="Larimer F."/>
            <person name="Land M."/>
            <person name="Hauser L."/>
            <person name="Kyrpides N."/>
            <person name="Anderson I."/>
            <person name="Sieprawska-Lupa M."/>
            <person name="Whitman W.B."/>
            <person name="Richardson P."/>
        </authorList>
    </citation>
    <scope>NUCLEOTIDE SEQUENCE [LARGE SCALE GENOMIC DNA]</scope>
    <source>
        <strain>ATCC 35089 / DSM 1224 / JCM 13029 / OCM 148 / SB</strain>
    </source>
</reference>
<sequence>MKFSQNILRHELVGLNLEIVNSTDKRLISTKGRVINETRNMLVIEKNNGKEITVPKEISIFRFEFSDLDTPKKVDIDGRLLIGRPEDRLKRKIKQLYPY</sequence>
<evidence type="ECO:0000255" key="1">
    <source>
        <dbReference type="HAMAP-Rule" id="MF_00754"/>
    </source>
</evidence>
<organism>
    <name type="scientific">Methanococcus vannielii (strain ATCC 35089 / DSM 1224 / JCM 13029 / OCM 148 / SB)</name>
    <dbReference type="NCBI Taxonomy" id="406327"/>
    <lineage>
        <taxon>Archaea</taxon>
        <taxon>Methanobacteriati</taxon>
        <taxon>Methanobacteriota</taxon>
        <taxon>Methanomada group</taxon>
        <taxon>Methanococci</taxon>
        <taxon>Methanococcales</taxon>
        <taxon>Methanococcaceae</taxon>
        <taxon>Methanococcus</taxon>
    </lineage>
</organism>
<protein>
    <recommendedName>
        <fullName evidence="1">Ribonuclease P protein component 1</fullName>
        <shortName evidence="1">RNase P component 1</shortName>
        <ecNumber evidence="1">3.1.26.5</ecNumber>
    </recommendedName>
    <alternativeName>
        <fullName evidence="1">Rpp29</fullName>
    </alternativeName>
</protein>